<feature type="chain" id="PRO_0000319690" description="Phosphoribosyl-AMP cyclohydrolase">
    <location>
        <begin position="1"/>
        <end position="134"/>
    </location>
</feature>
<feature type="binding site" evidence="1">
    <location>
        <position position="80"/>
    </location>
    <ligand>
        <name>Mg(2+)</name>
        <dbReference type="ChEBI" id="CHEBI:18420"/>
    </ligand>
</feature>
<feature type="binding site" evidence="1">
    <location>
        <position position="81"/>
    </location>
    <ligand>
        <name>Zn(2+)</name>
        <dbReference type="ChEBI" id="CHEBI:29105"/>
        <note>ligand shared between dimeric partners</note>
    </ligand>
</feature>
<feature type="binding site" evidence="1">
    <location>
        <position position="82"/>
    </location>
    <ligand>
        <name>Mg(2+)</name>
        <dbReference type="ChEBI" id="CHEBI:18420"/>
    </ligand>
</feature>
<feature type="binding site" evidence="1">
    <location>
        <position position="84"/>
    </location>
    <ligand>
        <name>Mg(2+)</name>
        <dbReference type="ChEBI" id="CHEBI:18420"/>
    </ligand>
</feature>
<feature type="binding site" evidence="1">
    <location>
        <position position="98"/>
    </location>
    <ligand>
        <name>Zn(2+)</name>
        <dbReference type="ChEBI" id="CHEBI:29105"/>
        <note>ligand shared between dimeric partners</note>
    </ligand>
</feature>
<feature type="binding site" evidence="1">
    <location>
        <position position="105"/>
    </location>
    <ligand>
        <name>Zn(2+)</name>
        <dbReference type="ChEBI" id="CHEBI:29105"/>
        <note>ligand shared between dimeric partners</note>
    </ligand>
</feature>
<comment type="function">
    <text evidence="1">Catalyzes the hydrolysis of the adenine ring of phosphoribosyl-AMP.</text>
</comment>
<comment type="catalytic activity">
    <reaction evidence="1">
        <text>1-(5-phospho-beta-D-ribosyl)-5'-AMP + H2O = 1-(5-phospho-beta-D-ribosyl)-5-[(5-phospho-beta-D-ribosylamino)methylideneamino]imidazole-4-carboxamide</text>
        <dbReference type="Rhea" id="RHEA:20049"/>
        <dbReference type="ChEBI" id="CHEBI:15377"/>
        <dbReference type="ChEBI" id="CHEBI:58435"/>
        <dbReference type="ChEBI" id="CHEBI:59457"/>
        <dbReference type="EC" id="3.5.4.19"/>
    </reaction>
</comment>
<comment type="cofactor">
    <cofactor evidence="1">
        <name>Mg(2+)</name>
        <dbReference type="ChEBI" id="CHEBI:18420"/>
    </cofactor>
    <text evidence="1">Binds 1 Mg(2+) ion per subunit.</text>
</comment>
<comment type="cofactor">
    <cofactor evidence="1">
        <name>Zn(2+)</name>
        <dbReference type="ChEBI" id="CHEBI:29105"/>
    </cofactor>
    <text evidence="1">Binds 1 zinc ion per subunit.</text>
</comment>
<comment type="pathway">
    <text evidence="1">Amino-acid biosynthesis; L-histidine biosynthesis; L-histidine from 5-phospho-alpha-D-ribose 1-diphosphate: step 3/9.</text>
</comment>
<comment type="subunit">
    <text evidence="1">Homodimer.</text>
</comment>
<comment type="subcellular location">
    <subcellularLocation>
        <location evidence="1">Cytoplasm</location>
    </subcellularLocation>
</comment>
<comment type="similarity">
    <text evidence="1">Belongs to the PRA-CH family.</text>
</comment>
<accession>A4G9I5</accession>
<reference key="1">
    <citation type="journal article" date="2007" name="PLoS Genet.">
        <title>A tale of two oxidation states: bacterial colonization of arsenic-rich environments.</title>
        <authorList>
            <person name="Muller D."/>
            <person name="Medigue C."/>
            <person name="Koechler S."/>
            <person name="Barbe V."/>
            <person name="Barakat M."/>
            <person name="Talla E."/>
            <person name="Bonnefoy V."/>
            <person name="Krin E."/>
            <person name="Arsene-Ploetze F."/>
            <person name="Carapito C."/>
            <person name="Chandler M."/>
            <person name="Cournoyer B."/>
            <person name="Cruveiller S."/>
            <person name="Dossat C."/>
            <person name="Duval S."/>
            <person name="Heymann M."/>
            <person name="Leize E."/>
            <person name="Lieutaud A."/>
            <person name="Lievremont D."/>
            <person name="Makita Y."/>
            <person name="Mangenot S."/>
            <person name="Nitschke W."/>
            <person name="Ortet P."/>
            <person name="Perdrial N."/>
            <person name="Schoepp B."/>
            <person name="Siguier P."/>
            <person name="Simeonova D.D."/>
            <person name="Rouy Z."/>
            <person name="Segurens B."/>
            <person name="Turlin E."/>
            <person name="Vallenet D."/>
            <person name="van Dorsselaer A."/>
            <person name="Weiss S."/>
            <person name="Weissenbach J."/>
            <person name="Lett M.-C."/>
            <person name="Danchin A."/>
            <person name="Bertin P.N."/>
        </authorList>
    </citation>
    <scope>NUCLEOTIDE SEQUENCE [LARGE SCALE GENOMIC DNA]</scope>
    <source>
        <strain>ULPAs1</strain>
    </source>
</reference>
<evidence type="ECO:0000255" key="1">
    <source>
        <dbReference type="HAMAP-Rule" id="MF_01021"/>
    </source>
</evidence>
<keyword id="KW-0028">Amino-acid biosynthesis</keyword>
<keyword id="KW-0963">Cytoplasm</keyword>
<keyword id="KW-0368">Histidine biosynthesis</keyword>
<keyword id="KW-0378">Hydrolase</keyword>
<keyword id="KW-0460">Magnesium</keyword>
<keyword id="KW-0479">Metal-binding</keyword>
<keyword id="KW-1185">Reference proteome</keyword>
<keyword id="KW-0862">Zinc</keyword>
<proteinExistence type="inferred from homology"/>
<protein>
    <recommendedName>
        <fullName evidence="1">Phosphoribosyl-AMP cyclohydrolase</fullName>
        <shortName evidence="1">PRA-CH</shortName>
        <ecNumber evidence="1">3.5.4.19</ecNumber>
    </recommendedName>
</protein>
<gene>
    <name evidence="1" type="primary">hisI</name>
    <name type="ordered locus">HEAR3063</name>
</gene>
<sequence length="134" mass="15354">MSSNAKWLNKVKWDEHGLVPVIAQEVGSNDVLMFAWMNRDALAKTIESGEAIYWSRSRKKLWHKGEESGHTQKVHEVRLDCDEDVVLLKVEQVGAIACHTGRHSCFFQKFEGDAKEGDWETVEPVLKNPETIYK</sequence>
<organism>
    <name type="scientific">Herminiimonas arsenicoxydans</name>
    <dbReference type="NCBI Taxonomy" id="204773"/>
    <lineage>
        <taxon>Bacteria</taxon>
        <taxon>Pseudomonadati</taxon>
        <taxon>Pseudomonadota</taxon>
        <taxon>Betaproteobacteria</taxon>
        <taxon>Burkholderiales</taxon>
        <taxon>Oxalobacteraceae</taxon>
        <taxon>Herminiimonas</taxon>
    </lineage>
</organism>
<name>HIS3_HERAR</name>
<dbReference type="EC" id="3.5.4.19" evidence="1"/>
<dbReference type="EMBL" id="CU207211">
    <property type="protein sequence ID" value="CAL63172.1"/>
    <property type="molecule type" value="Genomic_DNA"/>
</dbReference>
<dbReference type="SMR" id="A4G9I5"/>
<dbReference type="STRING" id="204773.HEAR3063"/>
<dbReference type="KEGG" id="har:HEAR3063"/>
<dbReference type="eggNOG" id="COG0139">
    <property type="taxonomic scope" value="Bacteria"/>
</dbReference>
<dbReference type="HOGENOM" id="CLU_048577_5_0_4"/>
<dbReference type="OrthoDB" id="9795769at2"/>
<dbReference type="UniPathway" id="UPA00031">
    <property type="reaction ID" value="UER00008"/>
</dbReference>
<dbReference type="Proteomes" id="UP000006697">
    <property type="component" value="Chromosome"/>
</dbReference>
<dbReference type="GO" id="GO:0005737">
    <property type="term" value="C:cytoplasm"/>
    <property type="evidence" value="ECO:0007669"/>
    <property type="project" value="UniProtKB-SubCell"/>
</dbReference>
<dbReference type="GO" id="GO:0000287">
    <property type="term" value="F:magnesium ion binding"/>
    <property type="evidence" value="ECO:0007669"/>
    <property type="project" value="UniProtKB-UniRule"/>
</dbReference>
<dbReference type="GO" id="GO:0004635">
    <property type="term" value="F:phosphoribosyl-AMP cyclohydrolase activity"/>
    <property type="evidence" value="ECO:0007669"/>
    <property type="project" value="UniProtKB-UniRule"/>
</dbReference>
<dbReference type="GO" id="GO:0008270">
    <property type="term" value="F:zinc ion binding"/>
    <property type="evidence" value="ECO:0007669"/>
    <property type="project" value="UniProtKB-UniRule"/>
</dbReference>
<dbReference type="GO" id="GO:0000105">
    <property type="term" value="P:L-histidine biosynthetic process"/>
    <property type="evidence" value="ECO:0007669"/>
    <property type="project" value="UniProtKB-UniRule"/>
</dbReference>
<dbReference type="FunFam" id="3.10.20.810:FF:000001">
    <property type="entry name" value="Histidine biosynthesis bifunctional protein HisIE"/>
    <property type="match status" value="1"/>
</dbReference>
<dbReference type="Gene3D" id="3.10.20.810">
    <property type="entry name" value="Phosphoribosyl-AMP cyclohydrolase"/>
    <property type="match status" value="1"/>
</dbReference>
<dbReference type="HAMAP" id="MF_01021">
    <property type="entry name" value="HisI"/>
    <property type="match status" value="1"/>
</dbReference>
<dbReference type="InterPro" id="IPR026660">
    <property type="entry name" value="PRA-CH"/>
</dbReference>
<dbReference type="InterPro" id="IPR002496">
    <property type="entry name" value="PRib_AMP_CycHydrolase_dom"/>
</dbReference>
<dbReference type="InterPro" id="IPR038019">
    <property type="entry name" value="PRib_AMP_CycHydrolase_sf"/>
</dbReference>
<dbReference type="NCBIfam" id="NF000768">
    <property type="entry name" value="PRK00051.1"/>
    <property type="match status" value="1"/>
</dbReference>
<dbReference type="PANTHER" id="PTHR42945">
    <property type="entry name" value="HISTIDINE BIOSYNTHESIS BIFUNCTIONAL PROTEIN"/>
    <property type="match status" value="1"/>
</dbReference>
<dbReference type="PANTHER" id="PTHR42945:SF1">
    <property type="entry name" value="HISTIDINE BIOSYNTHESIS BIFUNCTIONAL PROTEIN HIS7"/>
    <property type="match status" value="1"/>
</dbReference>
<dbReference type="Pfam" id="PF01502">
    <property type="entry name" value="PRA-CH"/>
    <property type="match status" value="1"/>
</dbReference>
<dbReference type="SUPFAM" id="SSF141734">
    <property type="entry name" value="HisI-like"/>
    <property type="match status" value="1"/>
</dbReference>